<name>ATP6_SULSY</name>
<gene>
    <name evidence="1" type="primary">atpB</name>
    <name type="ordered locus">SYO3AOP1_0970</name>
</gene>
<proteinExistence type="inferred from homology"/>
<keyword id="KW-0066">ATP synthesis</keyword>
<keyword id="KW-0997">Cell inner membrane</keyword>
<keyword id="KW-1003">Cell membrane</keyword>
<keyword id="KW-0138">CF(0)</keyword>
<keyword id="KW-0375">Hydrogen ion transport</keyword>
<keyword id="KW-0406">Ion transport</keyword>
<keyword id="KW-0472">Membrane</keyword>
<keyword id="KW-0812">Transmembrane</keyword>
<keyword id="KW-1133">Transmembrane helix</keyword>
<keyword id="KW-0813">Transport</keyword>
<sequence length="207" mass="23015">MEQHVIMALTVLIVVPVIFTIFAKKPSLIPTPIQNVFEIYIEFIDNLIKENMGEKGRKYFPLIASIGLFVFFGNLLGIIPGLESPTANLNTTMALALLVFFIYNFEGIRENGIGYFKHFLGPVPAMAPVFVIIELLSHLSRPVTLALRLFANMTGGELISVVLIMLVPFLIPMPVMLIHLIAVFLQTYVFVVLTTVYIAGAITHAEH</sequence>
<accession>B2V9G8</accession>
<comment type="function">
    <text evidence="1">Key component of the proton channel; it plays a direct role in the translocation of protons across the membrane.</text>
</comment>
<comment type="subunit">
    <text evidence="1">F-type ATPases have 2 components, CF(1) - the catalytic core - and CF(0) - the membrane proton channel. CF(1) has five subunits: alpha(3), beta(3), gamma(1), delta(1), epsilon(1). CF(0) has three main subunits: a(1), b(2) and c(9-12). The alpha and beta chains form an alternating ring which encloses part of the gamma chain. CF(1) is attached to CF(0) by a central stalk formed by the gamma and epsilon chains, while a peripheral stalk is formed by the delta and b chains.</text>
</comment>
<comment type="subcellular location">
    <subcellularLocation>
        <location evidence="1">Cell inner membrane</location>
        <topology evidence="1">Multi-pass membrane protein</topology>
    </subcellularLocation>
</comment>
<comment type="similarity">
    <text evidence="1">Belongs to the ATPase A chain family.</text>
</comment>
<feature type="chain" id="PRO_0000362478" description="ATP synthase subunit a">
    <location>
        <begin position="1"/>
        <end position="207"/>
    </location>
</feature>
<feature type="transmembrane region" description="Helical" evidence="1">
    <location>
        <begin position="3"/>
        <end position="23"/>
    </location>
</feature>
<feature type="transmembrane region" description="Helical" evidence="1">
    <location>
        <begin position="62"/>
        <end position="82"/>
    </location>
</feature>
<feature type="transmembrane region" description="Helical" evidence="1">
    <location>
        <begin position="88"/>
        <end position="108"/>
    </location>
</feature>
<feature type="transmembrane region" description="Helical" evidence="1">
    <location>
        <begin position="119"/>
        <end position="139"/>
    </location>
</feature>
<feature type="transmembrane region" description="Helical" evidence="1">
    <location>
        <begin position="158"/>
        <end position="178"/>
    </location>
</feature>
<feature type="transmembrane region" description="Helical" evidence="1">
    <location>
        <begin position="180"/>
        <end position="200"/>
    </location>
</feature>
<reference key="1">
    <citation type="journal article" date="2009" name="J. Bacteriol.">
        <title>Complete and draft genome sequences of six members of the Aquificales.</title>
        <authorList>
            <person name="Reysenbach A.-L."/>
            <person name="Hamamura N."/>
            <person name="Podar M."/>
            <person name="Griffiths E."/>
            <person name="Ferreira S."/>
            <person name="Hochstein R."/>
            <person name="Heidelberg J."/>
            <person name="Johnson J."/>
            <person name="Mead D."/>
            <person name="Pohorille A."/>
            <person name="Sarmiento M."/>
            <person name="Schweighofer K."/>
            <person name="Seshadri R."/>
            <person name="Voytek M.A."/>
        </authorList>
    </citation>
    <scope>NUCLEOTIDE SEQUENCE [LARGE SCALE GENOMIC DNA]</scope>
    <source>
        <strain>YO3AOP1</strain>
    </source>
</reference>
<dbReference type="EMBL" id="CP001080">
    <property type="protein sequence ID" value="ACD66591.1"/>
    <property type="molecule type" value="Genomic_DNA"/>
</dbReference>
<dbReference type="RefSeq" id="WP_012459661.1">
    <property type="nucleotide sequence ID" value="NC_010730.1"/>
</dbReference>
<dbReference type="SMR" id="B2V9G8"/>
<dbReference type="STRING" id="436114.SYO3AOP1_0970"/>
<dbReference type="KEGG" id="sul:SYO3AOP1_0970"/>
<dbReference type="eggNOG" id="COG0356">
    <property type="taxonomic scope" value="Bacteria"/>
</dbReference>
<dbReference type="HOGENOM" id="CLU_041018_2_2_0"/>
<dbReference type="GO" id="GO:0005886">
    <property type="term" value="C:plasma membrane"/>
    <property type="evidence" value="ECO:0007669"/>
    <property type="project" value="UniProtKB-SubCell"/>
</dbReference>
<dbReference type="GO" id="GO:0045259">
    <property type="term" value="C:proton-transporting ATP synthase complex"/>
    <property type="evidence" value="ECO:0007669"/>
    <property type="project" value="UniProtKB-KW"/>
</dbReference>
<dbReference type="GO" id="GO:0046933">
    <property type="term" value="F:proton-transporting ATP synthase activity, rotational mechanism"/>
    <property type="evidence" value="ECO:0007669"/>
    <property type="project" value="UniProtKB-UniRule"/>
</dbReference>
<dbReference type="GO" id="GO:0042777">
    <property type="term" value="P:proton motive force-driven plasma membrane ATP synthesis"/>
    <property type="evidence" value="ECO:0007669"/>
    <property type="project" value="TreeGrafter"/>
</dbReference>
<dbReference type="CDD" id="cd00310">
    <property type="entry name" value="ATP-synt_Fo_a_6"/>
    <property type="match status" value="1"/>
</dbReference>
<dbReference type="FunFam" id="1.20.120.220:FF:000006">
    <property type="entry name" value="ATP synthase subunit a"/>
    <property type="match status" value="1"/>
</dbReference>
<dbReference type="Gene3D" id="1.20.120.220">
    <property type="entry name" value="ATP synthase, F0 complex, subunit A"/>
    <property type="match status" value="1"/>
</dbReference>
<dbReference type="HAMAP" id="MF_01393">
    <property type="entry name" value="ATP_synth_a_bact"/>
    <property type="match status" value="1"/>
</dbReference>
<dbReference type="InterPro" id="IPR045082">
    <property type="entry name" value="ATP_syn_F0_a_bact/chloroplast"/>
</dbReference>
<dbReference type="InterPro" id="IPR000568">
    <property type="entry name" value="ATP_synth_F0_asu"/>
</dbReference>
<dbReference type="InterPro" id="IPR023011">
    <property type="entry name" value="ATP_synth_F0_asu_AS"/>
</dbReference>
<dbReference type="InterPro" id="IPR035908">
    <property type="entry name" value="F0_ATP_A_sf"/>
</dbReference>
<dbReference type="NCBIfam" id="TIGR01131">
    <property type="entry name" value="ATP_synt_6_or_A"/>
    <property type="match status" value="1"/>
</dbReference>
<dbReference type="PANTHER" id="PTHR42823">
    <property type="entry name" value="ATP SYNTHASE SUBUNIT A, CHLOROPLASTIC"/>
    <property type="match status" value="1"/>
</dbReference>
<dbReference type="PANTHER" id="PTHR42823:SF3">
    <property type="entry name" value="ATP SYNTHASE SUBUNIT A, CHLOROPLASTIC"/>
    <property type="match status" value="1"/>
</dbReference>
<dbReference type="Pfam" id="PF00119">
    <property type="entry name" value="ATP-synt_A"/>
    <property type="match status" value="1"/>
</dbReference>
<dbReference type="PRINTS" id="PR00123">
    <property type="entry name" value="ATPASEA"/>
</dbReference>
<dbReference type="SUPFAM" id="SSF81336">
    <property type="entry name" value="F1F0 ATP synthase subunit A"/>
    <property type="match status" value="1"/>
</dbReference>
<dbReference type="PROSITE" id="PS00449">
    <property type="entry name" value="ATPASE_A"/>
    <property type="match status" value="1"/>
</dbReference>
<protein>
    <recommendedName>
        <fullName evidence="1">ATP synthase subunit a</fullName>
    </recommendedName>
    <alternativeName>
        <fullName evidence="1">ATP synthase F0 sector subunit a</fullName>
    </alternativeName>
    <alternativeName>
        <fullName evidence="1">F-ATPase subunit 6</fullName>
    </alternativeName>
</protein>
<evidence type="ECO:0000255" key="1">
    <source>
        <dbReference type="HAMAP-Rule" id="MF_01393"/>
    </source>
</evidence>
<organism>
    <name type="scientific">Sulfurihydrogenibium sp. (strain YO3AOP1)</name>
    <dbReference type="NCBI Taxonomy" id="436114"/>
    <lineage>
        <taxon>Bacteria</taxon>
        <taxon>Pseudomonadati</taxon>
        <taxon>Aquificota</taxon>
        <taxon>Aquificia</taxon>
        <taxon>Aquificales</taxon>
        <taxon>Hydrogenothermaceae</taxon>
        <taxon>Sulfurihydrogenibium</taxon>
    </lineage>
</organism>